<sequence length="244" mass="26491">MPPSAQTQPKYKRVLLKLSGEALMGEENFGIDPKVLNRMALEIGQLIGIGVQVGLVIGGGNLFRGKALQDAGMDRVTGDHMGMLATVMNALAMRDALERSNIATRVMSAIPMSGVVEHYDRRRAIRDLKEGDVVIFCAGTGNPFFTTDSAACLRGIEIDADVVLKATKVDGVYSDDPMKVADAVKYDRLTYDEVLERKLGVMDLTAICLCRDHGMPVRVFDMNKASALINIVVGMEEGTLIERG</sequence>
<protein>
    <recommendedName>
        <fullName evidence="1">Uridylate kinase</fullName>
        <shortName evidence="1">UK</shortName>
        <ecNumber evidence="1">2.7.4.22</ecNumber>
    </recommendedName>
    <alternativeName>
        <fullName evidence="1">Uridine monophosphate kinase</fullName>
        <shortName evidence="1">UMP kinase</shortName>
        <shortName evidence="1">UMPK</shortName>
    </alternativeName>
</protein>
<dbReference type="EC" id="2.7.4.22" evidence="1"/>
<dbReference type="EMBL" id="CP000155">
    <property type="protein sequence ID" value="ABC31925.1"/>
    <property type="molecule type" value="Genomic_DNA"/>
</dbReference>
<dbReference type="RefSeq" id="WP_011398989.1">
    <property type="nucleotide sequence ID" value="NC_007645.1"/>
</dbReference>
<dbReference type="SMR" id="Q2SBP9"/>
<dbReference type="STRING" id="349521.HCH_05251"/>
<dbReference type="KEGG" id="hch:HCH_05251"/>
<dbReference type="eggNOG" id="COG0528">
    <property type="taxonomic scope" value="Bacteria"/>
</dbReference>
<dbReference type="HOGENOM" id="CLU_033861_0_0_6"/>
<dbReference type="OrthoDB" id="9807458at2"/>
<dbReference type="UniPathway" id="UPA00159">
    <property type="reaction ID" value="UER00275"/>
</dbReference>
<dbReference type="Proteomes" id="UP000000238">
    <property type="component" value="Chromosome"/>
</dbReference>
<dbReference type="GO" id="GO:0005829">
    <property type="term" value="C:cytosol"/>
    <property type="evidence" value="ECO:0007669"/>
    <property type="project" value="TreeGrafter"/>
</dbReference>
<dbReference type="GO" id="GO:0005524">
    <property type="term" value="F:ATP binding"/>
    <property type="evidence" value="ECO:0007669"/>
    <property type="project" value="UniProtKB-KW"/>
</dbReference>
<dbReference type="GO" id="GO:0033862">
    <property type="term" value="F:UMP kinase activity"/>
    <property type="evidence" value="ECO:0007669"/>
    <property type="project" value="UniProtKB-EC"/>
</dbReference>
<dbReference type="GO" id="GO:0044210">
    <property type="term" value="P:'de novo' CTP biosynthetic process"/>
    <property type="evidence" value="ECO:0007669"/>
    <property type="project" value="UniProtKB-UniRule"/>
</dbReference>
<dbReference type="GO" id="GO:0006225">
    <property type="term" value="P:UDP biosynthetic process"/>
    <property type="evidence" value="ECO:0007669"/>
    <property type="project" value="TreeGrafter"/>
</dbReference>
<dbReference type="CDD" id="cd04254">
    <property type="entry name" value="AAK_UMPK-PyrH-Ec"/>
    <property type="match status" value="1"/>
</dbReference>
<dbReference type="FunFam" id="3.40.1160.10:FF:000001">
    <property type="entry name" value="Uridylate kinase"/>
    <property type="match status" value="1"/>
</dbReference>
<dbReference type="Gene3D" id="3.40.1160.10">
    <property type="entry name" value="Acetylglutamate kinase-like"/>
    <property type="match status" value="1"/>
</dbReference>
<dbReference type="HAMAP" id="MF_01220_B">
    <property type="entry name" value="PyrH_B"/>
    <property type="match status" value="1"/>
</dbReference>
<dbReference type="InterPro" id="IPR036393">
    <property type="entry name" value="AceGlu_kinase-like_sf"/>
</dbReference>
<dbReference type="InterPro" id="IPR001048">
    <property type="entry name" value="Asp/Glu/Uridylate_kinase"/>
</dbReference>
<dbReference type="InterPro" id="IPR011817">
    <property type="entry name" value="Uridylate_kinase"/>
</dbReference>
<dbReference type="InterPro" id="IPR015963">
    <property type="entry name" value="Uridylate_kinase_bac"/>
</dbReference>
<dbReference type="NCBIfam" id="TIGR02075">
    <property type="entry name" value="pyrH_bact"/>
    <property type="match status" value="1"/>
</dbReference>
<dbReference type="PANTHER" id="PTHR42833">
    <property type="entry name" value="URIDYLATE KINASE"/>
    <property type="match status" value="1"/>
</dbReference>
<dbReference type="PANTHER" id="PTHR42833:SF4">
    <property type="entry name" value="URIDYLATE KINASE PUMPKIN, CHLOROPLASTIC"/>
    <property type="match status" value="1"/>
</dbReference>
<dbReference type="Pfam" id="PF00696">
    <property type="entry name" value="AA_kinase"/>
    <property type="match status" value="1"/>
</dbReference>
<dbReference type="PIRSF" id="PIRSF005650">
    <property type="entry name" value="Uridylate_kin"/>
    <property type="match status" value="1"/>
</dbReference>
<dbReference type="SUPFAM" id="SSF53633">
    <property type="entry name" value="Carbamate kinase-like"/>
    <property type="match status" value="1"/>
</dbReference>
<feature type="chain" id="PRO_0000323861" description="Uridylate kinase">
    <location>
        <begin position="1"/>
        <end position="244"/>
    </location>
</feature>
<feature type="binding site" evidence="1">
    <location>
        <begin position="17"/>
        <end position="20"/>
    </location>
    <ligand>
        <name>ATP</name>
        <dbReference type="ChEBI" id="CHEBI:30616"/>
    </ligand>
</feature>
<feature type="binding site" evidence="1">
    <location>
        <position position="59"/>
    </location>
    <ligand>
        <name>UMP</name>
        <dbReference type="ChEBI" id="CHEBI:57865"/>
    </ligand>
</feature>
<feature type="binding site" evidence="1">
    <location>
        <position position="60"/>
    </location>
    <ligand>
        <name>ATP</name>
        <dbReference type="ChEBI" id="CHEBI:30616"/>
    </ligand>
</feature>
<feature type="binding site" evidence="1">
    <location>
        <position position="64"/>
    </location>
    <ligand>
        <name>ATP</name>
        <dbReference type="ChEBI" id="CHEBI:30616"/>
    </ligand>
</feature>
<feature type="binding site" evidence="1">
    <location>
        <position position="79"/>
    </location>
    <ligand>
        <name>UMP</name>
        <dbReference type="ChEBI" id="CHEBI:57865"/>
    </ligand>
</feature>
<feature type="binding site" evidence="1">
    <location>
        <begin position="140"/>
        <end position="147"/>
    </location>
    <ligand>
        <name>UMP</name>
        <dbReference type="ChEBI" id="CHEBI:57865"/>
    </ligand>
</feature>
<feature type="binding site" evidence="1">
    <location>
        <position position="167"/>
    </location>
    <ligand>
        <name>ATP</name>
        <dbReference type="ChEBI" id="CHEBI:30616"/>
    </ligand>
</feature>
<feature type="binding site" evidence="1">
    <location>
        <position position="173"/>
    </location>
    <ligand>
        <name>ATP</name>
        <dbReference type="ChEBI" id="CHEBI:30616"/>
    </ligand>
</feature>
<feature type="binding site" evidence="1">
    <location>
        <position position="176"/>
    </location>
    <ligand>
        <name>ATP</name>
        <dbReference type="ChEBI" id="CHEBI:30616"/>
    </ligand>
</feature>
<comment type="function">
    <text evidence="1">Catalyzes the reversible phosphorylation of UMP to UDP.</text>
</comment>
<comment type="catalytic activity">
    <reaction evidence="1">
        <text>UMP + ATP = UDP + ADP</text>
        <dbReference type="Rhea" id="RHEA:24400"/>
        <dbReference type="ChEBI" id="CHEBI:30616"/>
        <dbReference type="ChEBI" id="CHEBI:57865"/>
        <dbReference type="ChEBI" id="CHEBI:58223"/>
        <dbReference type="ChEBI" id="CHEBI:456216"/>
        <dbReference type="EC" id="2.7.4.22"/>
    </reaction>
</comment>
<comment type="activity regulation">
    <text evidence="1">Inhibited by UTP.</text>
</comment>
<comment type="pathway">
    <text evidence="1">Pyrimidine metabolism; CTP biosynthesis via de novo pathway; UDP from UMP (UMPK route): step 1/1.</text>
</comment>
<comment type="subunit">
    <text evidence="1">Homohexamer.</text>
</comment>
<comment type="subcellular location">
    <subcellularLocation>
        <location evidence="1">Cytoplasm</location>
    </subcellularLocation>
</comment>
<comment type="similarity">
    <text evidence="1">Belongs to the UMP kinase family.</text>
</comment>
<gene>
    <name evidence="1" type="primary">pyrH</name>
    <name type="ordered locus">HCH_05251</name>
</gene>
<evidence type="ECO:0000255" key="1">
    <source>
        <dbReference type="HAMAP-Rule" id="MF_01220"/>
    </source>
</evidence>
<keyword id="KW-0067">ATP-binding</keyword>
<keyword id="KW-0963">Cytoplasm</keyword>
<keyword id="KW-0418">Kinase</keyword>
<keyword id="KW-0547">Nucleotide-binding</keyword>
<keyword id="KW-0665">Pyrimidine biosynthesis</keyword>
<keyword id="KW-1185">Reference proteome</keyword>
<keyword id="KW-0808">Transferase</keyword>
<reference key="1">
    <citation type="journal article" date="2005" name="Nucleic Acids Res.">
        <title>Genomic blueprint of Hahella chejuensis, a marine microbe producing an algicidal agent.</title>
        <authorList>
            <person name="Jeong H."/>
            <person name="Yim J.H."/>
            <person name="Lee C."/>
            <person name="Choi S.-H."/>
            <person name="Park Y.K."/>
            <person name="Yoon S.H."/>
            <person name="Hur C.-G."/>
            <person name="Kang H.-Y."/>
            <person name="Kim D."/>
            <person name="Lee H.H."/>
            <person name="Park K.H."/>
            <person name="Park S.-H."/>
            <person name="Park H.-S."/>
            <person name="Lee H.K."/>
            <person name="Oh T.K."/>
            <person name="Kim J.F."/>
        </authorList>
    </citation>
    <scope>NUCLEOTIDE SEQUENCE [LARGE SCALE GENOMIC DNA]</scope>
    <source>
        <strain>KCTC 2396</strain>
    </source>
</reference>
<name>PYRH_HAHCH</name>
<organism>
    <name type="scientific">Hahella chejuensis (strain KCTC 2396)</name>
    <dbReference type="NCBI Taxonomy" id="349521"/>
    <lineage>
        <taxon>Bacteria</taxon>
        <taxon>Pseudomonadati</taxon>
        <taxon>Pseudomonadota</taxon>
        <taxon>Gammaproteobacteria</taxon>
        <taxon>Oceanospirillales</taxon>
        <taxon>Hahellaceae</taxon>
        <taxon>Hahella</taxon>
    </lineage>
</organism>
<accession>Q2SBP9</accession>
<proteinExistence type="inferred from homology"/>